<organism>
    <name type="scientific">Scheffersomyces stipitis (strain ATCC 58785 / CBS 6054 / NBRC 10063 / NRRL Y-11545)</name>
    <name type="common">Yeast</name>
    <name type="synonym">Pichia stipitis</name>
    <dbReference type="NCBI Taxonomy" id="322104"/>
    <lineage>
        <taxon>Eukaryota</taxon>
        <taxon>Fungi</taxon>
        <taxon>Dikarya</taxon>
        <taxon>Ascomycota</taxon>
        <taxon>Saccharomycotina</taxon>
        <taxon>Pichiomycetes</taxon>
        <taxon>Debaryomycetaceae</taxon>
        <taxon>Scheffersomyces</taxon>
    </lineage>
</organism>
<reference key="1">
    <citation type="journal article" date="2007" name="Nat. Biotechnol.">
        <title>Genome sequence of the lignocellulose-bioconverting and xylose-fermenting yeast Pichia stipitis.</title>
        <authorList>
            <person name="Jeffries T.W."/>
            <person name="Grigoriev I.V."/>
            <person name="Grimwood J."/>
            <person name="Laplaza J.M."/>
            <person name="Aerts A."/>
            <person name="Salamov A."/>
            <person name="Schmutz J."/>
            <person name="Lindquist E."/>
            <person name="Dehal P."/>
            <person name="Shapiro H."/>
            <person name="Jin Y.-S."/>
            <person name="Passoth V."/>
            <person name="Richardson P.M."/>
        </authorList>
    </citation>
    <scope>NUCLEOTIDE SEQUENCE [LARGE SCALE GENOMIC DNA]</scope>
    <source>
        <strain>ATCC 58785 / CBS 6054 / NBRC 10063 / NRRL Y-11545</strain>
    </source>
</reference>
<keyword id="KW-0010">Activator</keyword>
<keyword id="KW-0539">Nucleus</keyword>
<keyword id="KW-1185">Reference proteome</keyword>
<keyword id="KW-0804">Transcription</keyword>
<keyword id="KW-0805">Transcription regulation</keyword>
<feature type="chain" id="PRO_0000304780" description="Mediator of RNA polymerase II transcription subunit 19">
    <location>
        <begin position="1"/>
        <end position="173"/>
    </location>
</feature>
<feature type="region of interest" description="Disordered" evidence="2">
    <location>
        <begin position="139"/>
        <end position="173"/>
    </location>
</feature>
<evidence type="ECO:0000250" key="1"/>
<evidence type="ECO:0000256" key="2">
    <source>
        <dbReference type="SAM" id="MobiDB-lite"/>
    </source>
</evidence>
<evidence type="ECO:0000305" key="3"/>
<gene>
    <name type="primary">ROX3</name>
    <name type="synonym">MED19</name>
    <name type="ORF">PICST_67785</name>
</gene>
<name>MED19_PICST</name>
<sequence>MVNDNYNTAEGIDSYYLVNSKHKYSITSPSPLDNLLVLYGLEPIAKSLARTNADGSKGVKLRKSYKNHIQDLPGKHQIVGGQKPIPAGLLDPMVAQAPDIIKELDPELLSRGLRFEKTPINGIPGFNTADLAINDQHTLMRGDDMSENDEFGARRSKRKKKAQNGTDSKRQHI</sequence>
<protein>
    <recommendedName>
        <fullName>Mediator of RNA polymerase II transcription subunit 19</fullName>
    </recommendedName>
    <alternativeName>
        <fullName>Mediator complex subunit 19</fullName>
    </alternativeName>
</protein>
<proteinExistence type="inferred from homology"/>
<comment type="function">
    <text evidence="1">Component of the Mediator complex, a coactivator involved in the regulated transcription of nearly all RNA polymerase II-dependent genes. Mediator functions as a bridge to convey information from gene-specific regulatory proteins to the basal RNA polymerase II transcription machinery. Mediator is recruited to promoters by direct interactions with regulatory proteins and serves as a scaffold for the assembly of a functional preinitiation complex with RNA polymerase II and the general transcription factors (By similarity).</text>
</comment>
<comment type="subunit">
    <text evidence="1">Component of the Mediator complex.</text>
</comment>
<comment type="subcellular location">
    <subcellularLocation>
        <location evidence="1">Nucleus</location>
    </subcellularLocation>
</comment>
<comment type="similarity">
    <text evidence="3">Belongs to the Mediator complex subunit 19 family.</text>
</comment>
<dbReference type="EMBL" id="CP000499">
    <property type="protein sequence ID" value="ABN66701.2"/>
    <property type="molecule type" value="Genomic_DNA"/>
</dbReference>
<dbReference type="RefSeq" id="XP_001384730.2">
    <property type="nucleotide sequence ID" value="XM_001384693.1"/>
</dbReference>
<dbReference type="STRING" id="322104.A3LV29"/>
<dbReference type="GeneID" id="4839637"/>
<dbReference type="KEGG" id="pic:PICST_67785"/>
<dbReference type="eggNOG" id="ENOG502QXG3">
    <property type="taxonomic scope" value="Eukaryota"/>
</dbReference>
<dbReference type="HOGENOM" id="CLU_121530_0_0_1"/>
<dbReference type="InParanoid" id="A3LV29"/>
<dbReference type="OMA" id="MRGDDMS"/>
<dbReference type="OrthoDB" id="2160599at2759"/>
<dbReference type="Proteomes" id="UP000002258">
    <property type="component" value="Chromosome 5"/>
</dbReference>
<dbReference type="GO" id="GO:0070847">
    <property type="term" value="C:core mediator complex"/>
    <property type="evidence" value="ECO:0007669"/>
    <property type="project" value="TreeGrafter"/>
</dbReference>
<dbReference type="GO" id="GO:0016592">
    <property type="term" value="C:mediator complex"/>
    <property type="evidence" value="ECO:0007669"/>
    <property type="project" value="InterPro"/>
</dbReference>
<dbReference type="GO" id="GO:0003712">
    <property type="term" value="F:transcription coregulator activity"/>
    <property type="evidence" value="ECO:0007669"/>
    <property type="project" value="InterPro"/>
</dbReference>
<dbReference type="GO" id="GO:0006357">
    <property type="term" value="P:regulation of transcription by RNA polymerase II"/>
    <property type="evidence" value="ECO:0007669"/>
    <property type="project" value="InterPro"/>
</dbReference>
<dbReference type="InterPro" id="IPR013942">
    <property type="entry name" value="Mediator_Med19_fun"/>
</dbReference>
<dbReference type="PANTHER" id="PTHR28270">
    <property type="entry name" value="MEDIATOR OF RNA POLYMERASE II TRANSCRIPTION SUBUNIT 19"/>
    <property type="match status" value="1"/>
</dbReference>
<dbReference type="PANTHER" id="PTHR28270:SF1">
    <property type="entry name" value="MEDIATOR OF RNA POLYMERASE II TRANSCRIPTION SUBUNIT 19"/>
    <property type="match status" value="1"/>
</dbReference>
<dbReference type="Pfam" id="PF08633">
    <property type="entry name" value="Rox3"/>
    <property type="match status" value="1"/>
</dbReference>
<accession>A3LV29</accession>